<evidence type="ECO:0000255" key="1">
    <source>
        <dbReference type="HAMAP-Rule" id="MF_01557"/>
    </source>
</evidence>
<comment type="catalytic activity">
    <reaction evidence="1">
        <text>D-tagatofuranose 6-phosphate + ATP = D-tagatofuranose 1,6-bisphosphate + ADP + H(+)</text>
        <dbReference type="Rhea" id="RHEA:12420"/>
        <dbReference type="ChEBI" id="CHEBI:15378"/>
        <dbReference type="ChEBI" id="CHEBI:30616"/>
        <dbReference type="ChEBI" id="CHEBI:58694"/>
        <dbReference type="ChEBI" id="CHEBI:58695"/>
        <dbReference type="ChEBI" id="CHEBI:456216"/>
        <dbReference type="EC" id="2.7.1.144"/>
    </reaction>
</comment>
<comment type="pathway">
    <text evidence="1">Carbohydrate metabolism; D-tagatose 6-phosphate degradation; D-glyceraldehyde 3-phosphate and glycerone phosphate from D-tagatose 6-phosphate: step 1/2.</text>
</comment>
<comment type="similarity">
    <text evidence="1">Belongs to the carbohydrate kinase PfkB family. LacC subfamily.</text>
</comment>
<keyword id="KW-0067">ATP-binding</keyword>
<keyword id="KW-0418">Kinase</keyword>
<keyword id="KW-0423">Lactose metabolism</keyword>
<keyword id="KW-0547">Nucleotide-binding</keyword>
<keyword id="KW-0808">Transferase</keyword>
<gene>
    <name evidence="1" type="primary">lacC1</name>
    <name type="ordered locus">gbs1334</name>
</gene>
<sequence>MILTVTMNPSIDISYPLDVFKMDTVNRVAEVSKTAGGKGLNVTRVLAEIGDNVAATGLIGGTNGHFLLQHLPQNIQAFFYEIAGDTRNCIAILHEGQQTEILEAGPTIAAEEVNGFLHHYRSLMGATDVVAISGSLPAGLPTEFYVQLVEIAHQFGNKVVLDCSGVALQAALGSPVKPTAIKPNNEELSQLLGREVSKDLNELKEVLSEPLFEGIEWIIVSLGADGAFAKHWDTFYKVDIPKIEVVNPVGSGDSTVAGISSALSHQVDDYSLLKKANVLGMLNAQEKMTGHVNVSKYDNLYNQITVKEV</sequence>
<protein>
    <recommendedName>
        <fullName evidence="1">Tagatose-6-phosphate kinase 1</fullName>
        <ecNumber evidence="1">2.7.1.144</ecNumber>
    </recommendedName>
    <alternativeName>
        <fullName evidence="1">Phosphotagatokinase 1</fullName>
    </alternativeName>
</protein>
<dbReference type="EC" id="2.7.1.144" evidence="1"/>
<dbReference type="EMBL" id="AL766850">
    <property type="protein sequence ID" value="CAD46993.1"/>
    <property type="molecule type" value="Genomic_DNA"/>
</dbReference>
<dbReference type="RefSeq" id="WP_000604309.1">
    <property type="nucleotide sequence ID" value="NC_004368.1"/>
</dbReference>
<dbReference type="SMR" id="Q8E4R7"/>
<dbReference type="KEGG" id="san:gbs1334"/>
<dbReference type="eggNOG" id="COG1105">
    <property type="taxonomic scope" value="Bacteria"/>
</dbReference>
<dbReference type="HOGENOM" id="CLU_050013_5_0_9"/>
<dbReference type="UniPathway" id="UPA00704">
    <property type="reaction ID" value="UER00715"/>
</dbReference>
<dbReference type="Proteomes" id="UP000000823">
    <property type="component" value="Chromosome"/>
</dbReference>
<dbReference type="GO" id="GO:0005829">
    <property type="term" value="C:cytosol"/>
    <property type="evidence" value="ECO:0007669"/>
    <property type="project" value="TreeGrafter"/>
</dbReference>
<dbReference type="GO" id="GO:0005524">
    <property type="term" value="F:ATP binding"/>
    <property type="evidence" value="ECO:0007669"/>
    <property type="project" value="UniProtKB-KW"/>
</dbReference>
<dbReference type="GO" id="GO:0008443">
    <property type="term" value="F:phosphofructokinase activity"/>
    <property type="evidence" value="ECO:0007669"/>
    <property type="project" value="TreeGrafter"/>
</dbReference>
<dbReference type="GO" id="GO:0009024">
    <property type="term" value="F:tagatose-6-phosphate kinase activity"/>
    <property type="evidence" value="ECO:0007669"/>
    <property type="project" value="UniProtKB-UniRule"/>
</dbReference>
<dbReference type="GO" id="GO:2001059">
    <property type="term" value="P:D-tagatose 6-phosphate catabolic process"/>
    <property type="evidence" value="ECO:0007669"/>
    <property type="project" value="UniProtKB-UniRule"/>
</dbReference>
<dbReference type="GO" id="GO:0019512">
    <property type="term" value="P:lactose catabolic process via tagatose-6-phosphate"/>
    <property type="evidence" value="ECO:0007669"/>
    <property type="project" value="InterPro"/>
</dbReference>
<dbReference type="CDD" id="cd01164">
    <property type="entry name" value="FruK_PfkB_like"/>
    <property type="match status" value="1"/>
</dbReference>
<dbReference type="FunFam" id="3.40.1190.20:FF:000001">
    <property type="entry name" value="Phosphofructokinase"/>
    <property type="match status" value="1"/>
</dbReference>
<dbReference type="Gene3D" id="3.40.1190.20">
    <property type="match status" value="1"/>
</dbReference>
<dbReference type="HAMAP" id="MF_01557">
    <property type="entry name" value="LacC"/>
    <property type="match status" value="1"/>
</dbReference>
<dbReference type="InterPro" id="IPR002173">
    <property type="entry name" value="Carboh/pur_kinase_PfkB_CS"/>
</dbReference>
<dbReference type="InterPro" id="IPR005926">
    <property type="entry name" value="LacC"/>
</dbReference>
<dbReference type="InterPro" id="IPR011611">
    <property type="entry name" value="PfkB_dom"/>
</dbReference>
<dbReference type="InterPro" id="IPR029056">
    <property type="entry name" value="Ribokinase-like"/>
</dbReference>
<dbReference type="InterPro" id="IPR017583">
    <property type="entry name" value="Tagatose/fructose_Pkinase"/>
</dbReference>
<dbReference type="NCBIfam" id="TIGR03168">
    <property type="entry name" value="1-PFK"/>
    <property type="match status" value="1"/>
</dbReference>
<dbReference type="NCBIfam" id="TIGR01231">
    <property type="entry name" value="lacC"/>
    <property type="match status" value="1"/>
</dbReference>
<dbReference type="NCBIfam" id="NF010033">
    <property type="entry name" value="PRK13508.1"/>
    <property type="match status" value="1"/>
</dbReference>
<dbReference type="PANTHER" id="PTHR46566:SF5">
    <property type="entry name" value="1-PHOSPHOFRUCTOKINASE"/>
    <property type="match status" value="1"/>
</dbReference>
<dbReference type="PANTHER" id="PTHR46566">
    <property type="entry name" value="1-PHOSPHOFRUCTOKINASE-RELATED"/>
    <property type="match status" value="1"/>
</dbReference>
<dbReference type="Pfam" id="PF00294">
    <property type="entry name" value="PfkB"/>
    <property type="match status" value="1"/>
</dbReference>
<dbReference type="PIRSF" id="PIRSF000535">
    <property type="entry name" value="1PFK/6PFK/LacC"/>
    <property type="match status" value="1"/>
</dbReference>
<dbReference type="SUPFAM" id="SSF53613">
    <property type="entry name" value="Ribokinase-like"/>
    <property type="match status" value="1"/>
</dbReference>
<dbReference type="PROSITE" id="PS00583">
    <property type="entry name" value="PFKB_KINASES_1"/>
    <property type="match status" value="1"/>
</dbReference>
<dbReference type="PROSITE" id="PS00584">
    <property type="entry name" value="PFKB_KINASES_2"/>
    <property type="match status" value="1"/>
</dbReference>
<accession>Q8E4R7</accession>
<proteinExistence type="inferred from homology"/>
<reference key="1">
    <citation type="journal article" date="2002" name="Mol. Microbiol.">
        <title>Genome sequence of Streptococcus agalactiae, a pathogen causing invasive neonatal disease.</title>
        <authorList>
            <person name="Glaser P."/>
            <person name="Rusniok C."/>
            <person name="Buchrieser C."/>
            <person name="Chevalier F."/>
            <person name="Frangeul L."/>
            <person name="Msadek T."/>
            <person name="Zouine M."/>
            <person name="Couve E."/>
            <person name="Lalioui L."/>
            <person name="Poyart C."/>
            <person name="Trieu-Cuot P."/>
            <person name="Kunst F."/>
        </authorList>
    </citation>
    <scope>NUCLEOTIDE SEQUENCE [LARGE SCALE GENOMIC DNA]</scope>
    <source>
        <strain>NEM316</strain>
    </source>
</reference>
<organism>
    <name type="scientific">Streptococcus agalactiae serotype III (strain NEM316)</name>
    <dbReference type="NCBI Taxonomy" id="211110"/>
    <lineage>
        <taxon>Bacteria</taxon>
        <taxon>Bacillati</taxon>
        <taxon>Bacillota</taxon>
        <taxon>Bacilli</taxon>
        <taxon>Lactobacillales</taxon>
        <taxon>Streptococcaceae</taxon>
        <taxon>Streptococcus</taxon>
    </lineage>
</organism>
<feature type="chain" id="PRO_0000203927" description="Tagatose-6-phosphate kinase 1">
    <location>
        <begin position="1"/>
        <end position="309"/>
    </location>
</feature>
<name>LACC1_STRA3</name>